<accession>Q0KFE7</accession>
<comment type="function">
    <text evidence="1">Catalyzes the transfer of endogenously produced octanoic acid from octanoyl-acyl-carrier-protein onto the lipoyl domains of lipoate-dependent enzymes. Lipoyl-ACP can also act as a substrate although octanoyl-ACP is likely to be the physiological substrate.</text>
</comment>
<comment type="catalytic activity">
    <reaction evidence="1">
        <text>octanoyl-[ACP] + L-lysyl-[protein] = N(6)-octanoyl-L-lysyl-[protein] + holo-[ACP] + H(+)</text>
        <dbReference type="Rhea" id="RHEA:17665"/>
        <dbReference type="Rhea" id="RHEA-COMP:9636"/>
        <dbReference type="Rhea" id="RHEA-COMP:9685"/>
        <dbReference type="Rhea" id="RHEA-COMP:9752"/>
        <dbReference type="Rhea" id="RHEA-COMP:9928"/>
        <dbReference type="ChEBI" id="CHEBI:15378"/>
        <dbReference type="ChEBI" id="CHEBI:29969"/>
        <dbReference type="ChEBI" id="CHEBI:64479"/>
        <dbReference type="ChEBI" id="CHEBI:78463"/>
        <dbReference type="ChEBI" id="CHEBI:78809"/>
        <dbReference type="EC" id="2.3.1.181"/>
    </reaction>
</comment>
<comment type="pathway">
    <text evidence="1">Protein modification; protein lipoylation via endogenous pathway; protein N(6)-(lipoyl)lysine from octanoyl-[acyl-carrier-protein]: step 1/2.</text>
</comment>
<comment type="subcellular location">
    <subcellularLocation>
        <location evidence="1">Cytoplasm</location>
    </subcellularLocation>
</comment>
<comment type="miscellaneous">
    <text evidence="1">In the reaction, the free carboxyl group of octanoic acid is attached via an amide linkage to the epsilon-amino group of a specific lysine residue of lipoyl domains of lipoate-dependent enzymes.</text>
</comment>
<comment type="similarity">
    <text evidence="1">Belongs to the LipB family.</text>
</comment>
<proteinExistence type="inferred from homology"/>
<dbReference type="EC" id="2.3.1.181" evidence="1"/>
<dbReference type="EMBL" id="AM260479">
    <property type="protein sequence ID" value="CAJ91274.1"/>
    <property type="molecule type" value="Genomic_DNA"/>
</dbReference>
<dbReference type="SMR" id="Q0KFE7"/>
<dbReference type="STRING" id="381666.H16_A0122"/>
<dbReference type="KEGG" id="reh:H16_A0122"/>
<dbReference type="eggNOG" id="COG0321">
    <property type="taxonomic scope" value="Bacteria"/>
</dbReference>
<dbReference type="HOGENOM" id="CLU_035168_3_1_4"/>
<dbReference type="UniPathway" id="UPA00538">
    <property type="reaction ID" value="UER00592"/>
</dbReference>
<dbReference type="Proteomes" id="UP000008210">
    <property type="component" value="Chromosome 1"/>
</dbReference>
<dbReference type="GO" id="GO:0005737">
    <property type="term" value="C:cytoplasm"/>
    <property type="evidence" value="ECO:0007669"/>
    <property type="project" value="UniProtKB-SubCell"/>
</dbReference>
<dbReference type="GO" id="GO:0033819">
    <property type="term" value="F:lipoyl(octanoyl) transferase activity"/>
    <property type="evidence" value="ECO:0007669"/>
    <property type="project" value="UniProtKB-EC"/>
</dbReference>
<dbReference type="GO" id="GO:0036211">
    <property type="term" value="P:protein modification process"/>
    <property type="evidence" value="ECO:0007669"/>
    <property type="project" value="InterPro"/>
</dbReference>
<dbReference type="CDD" id="cd16444">
    <property type="entry name" value="LipB"/>
    <property type="match status" value="1"/>
</dbReference>
<dbReference type="FunFam" id="3.30.930.10:FF:000020">
    <property type="entry name" value="Octanoyltransferase"/>
    <property type="match status" value="1"/>
</dbReference>
<dbReference type="Gene3D" id="3.30.930.10">
    <property type="entry name" value="Bira Bifunctional Protein, Domain 2"/>
    <property type="match status" value="1"/>
</dbReference>
<dbReference type="HAMAP" id="MF_00013">
    <property type="entry name" value="LipB"/>
    <property type="match status" value="1"/>
</dbReference>
<dbReference type="InterPro" id="IPR045864">
    <property type="entry name" value="aa-tRNA-synth_II/BPL/LPL"/>
</dbReference>
<dbReference type="InterPro" id="IPR004143">
    <property type="entry name" value="BPL_LPL_catalytic"/>
</dbReference>
<dbReference type="InterPro" id="IPR000544">
    <property type="entry name" value="Octanoyltransferase"/>
</dbReference>
<dbReference type="InterPro" id="IPR020605">
    <property type="entry name" value="Octanoyltransferase_CS"/>
</dbReference>
<dbReference type="NCBIfam" id="TIGR00214">
    <property type="entry name" value="lipB"/>
    <property type="match status" value="1"/>
</dbReference>
<dbReference type="NCBIfam" id="NF010922">
    <property type="entry name" value="PRK14342.1"/>
    <property type="match status" value="1"/>
</dbReference>
<dbReference type="NCBIfam" id="NF010923">
    <property type="entry name" value="PRK14343.1"/>
    <property type="match status" value="1"/>
</dbReference>
<dbReference type="PANTHER" id="PTHR10993:SF7">
    <property type="entry name" value="LIPOYLTRANSFERASE 2, MITOCHONDRIAL-RELATED"/>
    <property type="match status" value="1"/>
</dbReference>
<dbReference type="PANTHER" id="PTHR10993">
    <property type="entry name" value="OCTANOYLTRANSFERASE"/>
    <property type="match status" value="1"/>
</dbReference>
<dbReference type="Pfam" id="PF21948">
    <property type="entry name" value="LplA-B_cat"/>
    <property type="match status" value="1"/>
</dbReference>
<dbReference type="SUPFAM" id="SSF55681">
    <property type="entry name" value="Class II aaRS and biotin synthetases"/>
    <property type="match status" value="1"/>
</dbReference>
<dbReference type="PROSITE" id="PS51733">
    <property type="entry name" value="BPL_LPL_CATALYTIC"/>
    <property type="match status" value="1"/>
</dbReference>
<dbReference type="PROSITE" id="PS01313">
    <property type="entry name" value="LIPB"/>
    <property type="match status" value="1"/>
</dbReference>
<name>LIPB_CUPNH</name>
<protein>
    <recommendedName>
        <fullName evidence="1">Octanoyltransferase</fullName>
        <ecNumber evidence="1">2.3.1.181</ecNumber>
    </recommendedName>
    <alternativeName>
        <fullName evidence="1">Lipoate-protein ligase B</fullName>
    </alternativeName>
    <alternativeName>
        <fullName evidence="1">Lipoyl/octanoyl transferase</fullName>
    </alternativeName>
    <alternativeName>
        <fullName evidence="1">Octanoyl-[acyl-carrier-protein]-protein N-octanoyltransferase</fullName>
    </alternativeName>
</protein>
<reference key="1">
    <citation type="journal article" date="2006" name="Nat. Biotechnol.">
        <title>Genome sequence of the bioplastic-producing 'Knallgas' bacterium Ralstonia eutropha H16.</title>
        <authorList>
            <person name="Pohlmann A."/>
            <person name="Fricke W.F."/>
            <person name="Reinecke F."/>
            <person name="Kusian B."/>
            <person name="Liesegang H."/>
            <person name="Cramm R."/>
            <person name="Eitinger T."/>
            <person name="Ewering C."/>
            <person name="Poetter M."/>
            <person name="Schwartz E."/>
            <person name="Strittmatter A."/>
            <person name="Voss I."/>
            <person name="Gottschalk G."/>
            <person name="Steinbuechel A."/>
            <person name="Friedrich B."/>
            <person name="Bowien B."/>
        </authorList>
    </citation>
    <scope>NUCLEOTIDE SEQUENCE [LARGE SCALE GENOMIC DNA]</scope>
    <source>
        <strain>ATCC 17699 / DSM 428 / KCTC 22496 / NCIMB 10442 / H16 / Stanier 337</strain>
    </source>
</reference>
<organism>
    <name type="scientific">Cupriavidus necator (strain ATCC 17699 / DSM 428 / KCTC 22496 / NCIMB 10442 / H16 / Stanier 337)</name>
    <name type="common">Ralstonia eutropha</name>
    <dbReference type="NCBI Taxonomy" id="381666"/>
    <lineage>
        <taxon>Bacteria</taxon>
        <taxon>Pseudomonadati</taxon>
        <taxon>Pseudomonadota</taxon>
        <taxon>Betaproteobacteria</taxon>
        <taxon>Burkholderiales</taxon>
        <taxon>Burkholderiaceae</taxon>
        <taxon>Cupriavidus</taxon>
    </lineage>
</organism>
<keyword id="KW-0012">Acyltransferase</keyword>
<keyword id="KW-0963">Cytoplasm</keyword>
<keyword id="KW-1185">Reference proteome</keyword>
<keyword id="KW-0808">Transferase</keyword>
<evidence type="ECO:0000255" key="1">
    <source>
        <dbReference type="HAMAP-Rule" id="MF_00013"/>
    </source>
</evidence>
<evidence type="ECO:0000255" key="2">
    <source>
        <dbReference type="PROSITE-ProRule" id="PRU01067"/>
    </source>
</evidence>
<sequence length="268" mass="28367">MTEAGPAQAGPFRYTLAMHPIQVIERGREDYQPCFDAMRAFTAARTPETPDQVWLVEHPPVYTLGQAGDPAHLLAPDDRIPVVQIDRGGQITYHGPGQVVAYLLLDLRRRRLMVRELVHGIEQAVLDTLAAYNLAAERKPGAPGIYLSDGPHQGAKIAALGLKIRNGCSYHGVSLNVQMDLSPFLRINPCGYAGLETVDMASAGATFAAADANGAPLPVTAAQQPEIALRLAAALCEVLAAHEARALAAEGTAAPAEAKQPGETALAS</sequence>
<feature type="chain" id="PRO_1000001118" description="Octanoyltransferase">
    <location>
        <begin position="1"/>
        <end position="268"/>
    </location>
</feature>
<feature type="domain" description="BPL/LPL catalytic" evidence="2">
    <location>
        <begin position="47"/>
        <end position="243"/>
    </location>
</feature>
<feature type="active site" description="Acyl-thioester intermediate" evidence="1">
    <location>
        <position position="190"/>
    </location>
</feature>
<feature type="binding site" evidence="1">
    <location>
        <begin position="87"/>
        <end position="94"/>
    </location>
    <ligand>
        <name>substrate</name>
    </ligand>
</feature>
<feature type="binding site" evidence="1">
    <location>
        <begin position="159"/>
        <end position="161"/>
    </location>
    <ligand>
        <name>substrate</name>
    </ligand>
</feature>
<feature type="binding site" evidence="1">
    <location>
        <begin position="172"/>
        <end position="174"/>
    </location>
    <ligand>
        <name>substrate</name>
    </ligand>
</feature>
<feature type="site" description="Lowers pKa of active site Cys" evidence="1">
    <location>
        <position position="156"/>
    </location>
</feature>
<gene>
    <name evidence="1" type="primary">lipB</name>
    <name type="ordered locus">H16_A0122</name>
</gene>